<protein>
    <recommendedName>
        <fullName>Membrane protein UL43</fullName>
    </recommendedName>
</protein>
<organismHost>
    <name type="scientific">Homo sapiens</name>
    <name type="common">Human</name>
    <dbReference type="NCBI Taxonomy" id="9606"/>
</organismHost>
<organism>
    <name type="scientific">Human herpesvirus 2 (strain HG52)</name>
    <name type="common">HHV-2</name>
    <name type="synonym">Human herpes simplex virus 2</name>
    <dbReference type="NCBI Taxonomy" id="10315"/>
    <lineage>
        <taxon>Viruses</taxon>
        <taxon>Duplodnaviria</taxon>
        <taxon>Heunggongvirae</taxon>
        <taxon>Peploviricota</taxon>
        <taxon>Herviviricetes</taxon>
        <taxon>Herpesvirales</taxon>
        <taxon>Orthoherpesviridae</taxon>
        <taxon>Alphaherpesvirinae</taxon>
        <taxon>Simplexvirus</taxon>
        <taxon>Simplexvirus humanalpha2</taxon>
        <taxon>Human herpesvirus 2</taxon>
    </lineage>
</organism>
<sequence>MCRGDSPGVAGGSGEHCLGGDDGDDGRPRLACVGAIARGFAHLWLQAATLGFVGSVVLSRGPYADAMSGAFVIGSTGLGFLRAPPAFARPPTRVCAWLRLVGGGAAVALWSLGEAGAPPGVPGPATQCLALGAAYAALLVLADDVHPLFLLAPRPLFVGTLGVVVGGLTIGGSARYWWIDPRAAAALTAAVVAGLGTTAAGDSFSKACPRHRRFCVVSAVESPPPRYAPEDAERPTDHGPLLPSTHHQRSPRVCGDGAARPENIWVPVVTFAGALALAACAARGSDAAPSGPVLPLWPQVFVGGHAAAGLTELCQTLAPRDLTDPLLFAYVGFQVVNHGLMFVVPDIAVYAMLGGAVWISLTQVLGLRRRLHKDPDAGPWAAATLRGLFFSVYALGFAAGVLVRPRMAASRRSG</sequence>
<reference key="1">
    <citation type="journal article" date="1998" name="J. Virol.">
        <title>The genome sequence of herpes simplex virus type 2.</title>
        <authorList>
            <person name="Dolan A."/>
            <person name="Jamieson F.E."/>
            <person name="Cunningham C."/>
            <person name="Barnett B.C."/>
            <person name="McGeoch D.J."/>
        </authorList>
    </citation>
    <scope>NUCLEOTIDE SEQUENCE [LARGE SCALE GENOMIC DNA]</scope>
</reference>
<accession>P89464</accession>
<feature type="chain" id="PRO_0000385491" description="Membrane protein UL43">
    <location>
        <begin position="1"/>
        <end position="414"/>
    </location>
</feature>
<feature type="transmembrane region" description="Helical" evidence="2">
    <location>
        <begin position="39"/>
        <end position="59"/>
    </location>
</feature>
<feature type="transmembrane region" description="Helical" evidence="2">
    <location>
        <begin position="61"/>
        <end position="81"/>
    </location>
</feature>
<feature type="transmembrane region" description="Helical" evidence="2">
    <location>
        <begin position="96"/>
        <end position="116"/>
    </location>
</feature>
<feature type="transmembrane region" description="Helical" evidence="2">
    <location>
        <begin position="121"/>
        <end position="141"/>
    </location>
</feature>
<feature type="transmembrane region" description="Helical" evidence="2">
    <location>
        <begin position="148"/>
        <end position="168"/>
    </location>
</feature>
<feature type="transmembrane region" description="Helical" evidence="2">
    <location>
        <begin position="184"/>
        <end position="204"/>
    </location>
</feature>
<feature type="transmembrane region" description="Helical" evidence="2">
    <location>
        <begin position="339"/>
        <end position="359"/>
    </location>
</feature>
<feature type="transmembrane region" description="Helical" evidence="2">
    <location>
        <begin position="383"/>
        <end position="403"/>
    </location>
</feature>
<feature type="region of interest" description="Disordered" evidence="3">
    <location>
        <begin position="225"/>
        <end position="253"/>
    </location>
</feature>
<feature type="compositionally biased region" description="Basic and acidic residues" evidence="3">
    <location>
        <begin position="228"/>
        <end position="237"/>
    </location>
</feature>
<evidence type="ECO:0000250" key="1"/>
<evidence type="ECO:0000255" key="2"/>
<evidence type="ECO:0000256" key="3">
    <source>
        <dbReference type="SAM" id="MobiDB-lite"/>
    </source>
</evidence>
<evidence type="ECO:0000305" key="4"/>
<name>MB43_HHV2H</name>
<comment type="subcellular location">
    <subcellularLocation>
        <location evidence="4">Membrane</location>
        <topology evidence="4">Multi-pass membrane protein</topology>
    </subcellularLocation>
    <text evidence="1">Not found in extracellular virion.</text>
</comment>
<comment type="similarity">
    <text evidence="4">Belongs to the alphaherpesvirinae HHV-1 UL43 family.</text>
</comment>
<gene>
    <name type="ORF">UL43</name>
</gene>
<proteinExistence type="inferred from homology"/>
<keyword id="KW-0472">Membrane</keyword>
<keyword id="KW-1185">Reference proteome</keyword>
<keyword id="KW-0812">Transmembrane</keyword>
<keyword id="KW-1133">Transmembrane helix</keyword>
<dbReference type="EMBL" id="Z86099">
    <property type="protein sequence ID" value="CAB06729.1"/>
    <property type="molecule type" value="Genomic_DNA"/>
</dbReference>
<dbReference type="RefSeq" id="YP_009137195.1">
    <property type="nucleotide sequence ID" value="NC_001798.2"/>
</dbReference>
<dbReference type="DNASU" id="1487330"/>
<dbReference type="GeneID" id="1487330"/>
<dbReference type="KEGG" id="vg:1487330"/>
<dbReference type="Proteomes" id="UP000001874">
    <property type="component" value="Segment"/>
</dbReference>
<dbReference type="GO" id="GO:0016020">
    <property type="term" value="C:membrane"/>
    <property type="evidence" value="ECO:0007669"/>
    <property type="project" value="UniProtKB-SubCell"/>
</dbReference>
<dbReference type="GO" id="GO:0019033">
    <property type="term" value="C:viral tegument"/>
    <property type="evidence" value="ECO:0007669"/>
    <property type="project" value="InterPro"/>
</dbReference>
<dbReference type="InterPro" id="IPR007764">
    <property type="entry name" value="Herpes_UL43"/>
</dbReference>
<dbReference type="Pfam" id="PF05072">
    <property type="entry name" value="Herpes_UL43"/>
    <property type="match status" value="1"/>
</dbReference>